<proteinExistence type="evidence at transcript level"/>
<dbReference type="EMBL" id="AP012340">
    <property type="protein sequence ID" value="BAL66669.1"/>
    <property type="molecule type" value="Genomic_DNA"/>
</dbReference>
<dbReference type="RefSeq" id="WP_003899401.1">
    <property type="nucleotide sequence ID" value="NZ_KK339487.1"/>
</dbReference>
<dbReference type="SMR" id="H8EUF2"/>
<dbReference type="KEGG" id="mtn:ERDMAN_2885"/>
<dbReference type="PATRIC" id="fig|652616.3.peg.2938"/>
<dbReference type="HOGENOM" id="CLU_037123_1_2_11"/>
<dbReference type="GO" id="GO:0005886">
    <property type="term" value="C:plasma membrane"/>
    <property type="evidence" value="ECO:0007669"/>
    <property type="project" value="UniProtKB-SubCell"/>
</dbReference>
<dbReference type="GO" id="GO:0046872">
    <property type="term" value="F:metal ion binding"/>
    <property type="evidence" value="ECO:0007669"/>
    <property type="project" value="UniProtKB-KW"/>
</dbReference>
<dbReference type="GO" id="GO:0008237">
    <property type="term" value="F:metallopeptidase activity"/>
    <property type="evidence" value="ECO:0007669"/>
    <property type="project" value="UniProtKB-KW"/>
</dbReference>
<dbReference type="GO" id="GO:0006508">
    <property type="term" value="P:proteolysis"/>
    <property type="evidence" value="ECO:0007669"/>
    <property type="project" value="UniProtKB-KW"/>
</dbReference>
<dbReference type="CDD" id="cd06164">
    <property type="entry name" value="S2P-M50_SpoIVFB_CBS"/>
    <property type="match status" value="1"/>
</dbReference>
<dbReference type="Gene3D" id="3.10.580.10">
    <property type="entry name" value="CBS-domain"/>
    <property type="match status" value="1"/>
</dbReference>
<dbReference type="InterPro" id="IPR000644">
    <property type="entry name" value="CBS_dom"/>
</dbReference>
<dbReference type="InterPro" id="IPR046342">
    <property type="entry name" value="CBS_dom_sf"/>
</dbReference>
<dbReference type="InterPro" id="IPR008915">
    <property type="entry name" value="Peptidase_M50"/>
</dbReference>
<dbReference type="InterPro" id="IPR016483">
    <property type="entry name" value="UCP006404_Pept_M50_CBS"/>
</dbReference>
<dbReference type="PANTHER" id="PTHR39188">
    <property type="entry name" value="MEMBRANE-ASSOCIATED ZINC METALLOPROTEASE M50B"/>
    <property type="match status" value="1"/>
</dbReference>
<dbReference type="PANTHER" id="PTHR39188:SF3">
    <property type="entry name" value="STAGE IV SPORULATION PROTEIN FB"/>
    <property type="match status" value="1"/>
</dbReference>
<dbReference type="Pfam" id="PF00571">
    <property type="entry name" value="CBS"/>
    <property type="match status" value="1"/>
</dbReference>
<dbReference type="Pfam" id="PF02163">
    <property type="entry name" value="Peptidase_M50"/>
    <property type="match status" value="2"/>
</dbReference>
<dbReference type="PIRSF" id="PIRSF006404">
    <property type="entry name" value="UCP006404_Pept_M50_CBS"/>
    <property type="match status" value="1"/>
</dbReference>
<dbReference type="SUPFAM" id="SSF54631">
    <property type="entry name" value="CBS-domain pair"/>
    <property type="match status" value="1"/>
</dbReference>
<dbReference type="PROSITE" id="PS51371">
    <property type="entry name" value="CBS"/>
    <property type="match status" value="2"/>
</dbReference>
<dbReference type="PROSITE" id="PS00142">
    <property type="entry name" value="ZINC_PROTEASE"/>
    <property type="match status" value="1"/>
</dbReference>
<accession>H8EUF2</accession>
<keyword id="KW-0129">CBS domain</keyword>
<keyword id="KW-1003">Cell membrane</keyword>
<keyword id="KW-0378">Hydrolase</keyword>
<keyword id="KW-0472">Membrane</keyword>
<keyword id="KW-0479">Metal-binding</keyword>
<keyword id="KW-0482">Metalloprotease</keyword>
<keyword id="KW-0645">Protease</keyword>
<keyword id="KW-0677">Repeat</keyword>
<keyword id="KW-0812">Transmembrane</keyword>
<keyword id="KW-1133">Transmembrane helix</keyword>
<keyword id="KW-0862">Zinc</keyword>
<gene>
    <name type="primary">rip3</name>
    <name type="ordered locus">ERDMAN_2885</name>
</gene>
<evidence type="ECO:0000250" key="1"/>
<evidence type="ECO:0000255" key="2"/>
<evidence type="ECO:0000255" key="3">
    <source>
        <dbReference type="PROSITE-ProRule" id="PRU00703"/>
    </source>
</evidence>
<evidence type="ECO:0000255" key="4">
    <source>
        <dbReference type="PROSITE-ProRule" id="PRU10095"/>
    </source>
</evidence>
<evidence type="ECO:0000269" key="5">
    <source>
    </source>
</evidence>
<evidence type="ECO:0000269" key="6">
    <source>
    </source>
</evidence>
<evidence type="ECO:0000305" key="7"/>
<protein>
    <recommendedName>
        <fullName>Putative zinc metalloprotease Rip3</fullName>
    </recommendedName>
</protein>
<comment type="cofactor">
    <cofactor evidence="1">
        <name>Zn(2+)</name>
        <dbReference type="ChEBI" id="CHEBI:29105"/>
    </cofactor>
    <text evidence="1">Binds 1 zinc ion per subunit.</text>
</comment>
<comment type="subcellular location">
    <subcellularLocation>
        <location evidence="7">Cell membrane</location>
        <topology evidence="7">Multi-pass membrane protein</topology>
    </subcellularLocation>
</comment>
<comment type="induction">
    <text evidence="5">A member of the dormancy regulon. Induced in response to carbon monoxide (CO). It is hoped that this regulon will give insight into the latent, or dormant phase of infection.</text>
</comment>
<comment type="disruption phenotype">
    <text evidence="6">Not essential. No effect on processing of anti-sigma factors RsdA, RskA, RslA or RsmA.</text>
</comment>
<comment type="similarity">
    <text evidence="7">Belongs to the peptidase M50B family.</text>
</comment>
<feature type="chain" id="PRO_0000422689" description="Putative zinc metalloprotease Rip3">
    <location>
        <begin position="1"/>
        <end position="393"/>
    </location>
</feature>
<feature type="transmembrane region" description="Helical" evidence="2">
    <location>
        <begin position="10"/>
        <end position="30"/>
    </location>
</feature>
<feature type="transmembrane region" description="Helical" evidence="2">
    <location>
        <begin position="45"/>
        <end position="65"/>
    </location>
</feature>
<feature type="transmembrane region" description="Helical" evidence="2">
    <location>
        <begin position="77"/>
        <end position="97"/>
    </location>
</feature>
<feature type="transmembrane region" description="Helical" evidence="2">
    <location>
        <begin position="108"/>
        <end position="128"/>
    </location>
</feature>
<feature type="transmembrane region" description="Helical" evidence="2">
    <location>
        <begin position="136"/>
        <end position="156"/>
    </location>
</feature>
<feature type="transmembrane region" description="Helical" evidence="2">
    <location>
        <begin position="207"/>
        <end position="227"/>
    </location>
</feature>
<feature type="domain" description="CBS 1" evidence="3">
    <location>
        <begin position="251"/>
        <end position="308"/>
    </location>
</feature>
<feature type="domain" description="CBS 2" evidence="3">
    <location>
        <begin position="315"/>
        <end position="376"/>
    </location>
</feature>
<feature type="active site" evidence="4">
    <location>
        <position position="67"/>
    </location>
</feature>
<feature type="binding site" evidence="4">
    <location>
        <position position="66"/>
    </location>
    <ligand>
        <name>Zn(2+)</name>
        <dbReference type="ChEBI" id="CHEBI:29105"/>
        <note>catalytic</note>
    </ligand>
</feature>
<feature type="binding site" evidence="4">
    <location>
        <position position="70"/>
    </location>
    <ligand>
        <name>Zn(2+)</name>
        <dbReference type="ChEBI" id="CHEBI:29105"/>
        <note>catalytic</note>
    </ligand>
</feature>
<organism>
    <name type="scientific">Mycobacterium tuberculosis (strain ATCC 35801 / TMC 107 / Erdman)</name>
    <dbReference type="NCBI Taxonomy" id="652616"/>
    <lineage>
        <taxon>Bacteria</taxon>
        <taxon>Bacillati</taxon>
        <taxon>Actinomycetota</taxon>
        <taxon>Actinomycetes</taxon>
        <taxon>Mycobacteriales</taxon>
        <taxon>Mycobacteriaceae</taxon>
        <taxon>Mycobacterium</taxon>
        <taxon>Mycobacterium tuberculosis complex</taxon>
    </lineage>
</organism>
<sequence>MRDAIPLGRIAGFVVNVHWSVLVILWLFTWSLATMLPGTVGGYPAVVYWLLGAGGAVMLLASLLAHELAHAVVARRAGVSVESVTLWLFGGVTALGGEAKTPKAAFRIAFAGPATSLALSATFGALAITLAGVRTPAIVISVAWWLATVNLLLGLFNLLPGAPLDGGRLVRAYLWRRHGDSVRAGIGAARAGRVVALVLIALGLAEFVAGGLVGGVWLAFIGWFIFAAAREEETRISTQQLFAGVRVADAMTAQPHTAPGWINVEDFIQRYVLGERHSAYPVADRDGSITGLVALRQLRDVAPSRRSTTSVGDIALPLHSVPTARPQEPLTALLERMAPLGPRSRALVTEGSAVVGIVTPSDVARLIDVYRLAQPEPTFTTSPQDADRFSDAG</sequence>
<reference key="1">
    <citation type="journal article" date="2012" name="J. Bacteriol.">
        <title>Complete annotated genome sequence of Mycobacterium tuberculosis Erdman.</title>
        <authorList>
            <person name="Miyoshi-Akiyama T."/>
            <person name="Matsumura K."/>
            <person name="Iwai H."/>
            <person name="Funatogawa K."/>
            <person name="Kirikae T."/>
        </authorList>
    </citation>
    <scope>NUCLEOTIDE SEQUENCE [LARGE SCALE GENOMIC DNA]</scope>
    <source>
        <strain>ATCC 35801 / TMC 107 / Erdman</strain>
    </source>
</reference>
<reference key="2">
    <citation type="journal article" date="2008" name="Cell Host Microbe">
        <title>Mycobacterium tuberculosis senses host-derived carbon monoxide during macrophage infection.</title>
        <authorList>
            <person name="Shiloh M.U."/>
            <person name="Manzanillo P."/>
            <person name="Cox J.S."/>
        </authorList>
    </citation>
    <scope>INDUCTION BY CARBON MONOXIDE (CO)</scope>
    <source>
        <strain>ATCC 35801 / TMC 107 / Erdman</strain>
    </source>
</reference>
<reference key="3">
    <citation type="journal article" date="2010" name="Mol. Microbiol.">
        <title>M. tuberculosis intramembrane protease Rip1 controls transcription through three anti-sigma factor substrates.</title>
        <authorList>
            <person name="Sklar J.G."/>
            <person name="Makinoshima H."/>
            <person name="Schneider J.S."/>
            <person name="Glickman M.S."/>
        </authorList>
    </citation>
    <scope>DISRUPTION PHENOTYPE</scope>
    <source>
        <strain>ATCC 35801 / TMC 107 / Erdman</strain>
    </source>
</reference>
<name>RIP3_MYCTE</name>